<protein>
    <recommendedName>
        <fullName evidence="1">Bifunctional protein GlmU</fullName>
    </recommendedName>
    <domain>
        <recommendedName>
            <fullName evidence="1">UDP-N-acetylglucosamine pyrophosphorylase</fullName>
            <ecNumber evidence="1">2.7.7.23</ecNumber>
        </recommendedName>
        <alternativeName>
            <fullName evidence="1">N-acetylglucosamine-1-phosphate uridyltransferase</fullName>
        </alternativeName>
    </domain>
    <domain>
        <recommendedName>
            <fullName evidence="1">Glucosamine-1-phosphate N-acetyltransferase</fullName>
            <ecNumber evidence="1">2.3.1.157</ecNumber>
        </recommendedName>
    </domain>
</protein>
<dbReference type="EC" id="2.7.7.23" evidence="1"/>
<dbReference type="EC" id="2.3.1.157" evidence="1"/>
<dbReference type="EMBL" id="CP000946">
    <property type="protein sequence ID" value="ACA79860.1"/>
    <property type="molecule type" value="Genomic_DNA"/>
</dbReference>
<dbReference type="RefSeq" id="WP_000933736.1">
    <property type="nucleotide sequence ID" value="NZ_MTFT01000013.1"/>
</dbReference>
<dbReference type="SMR" id="B1IX08"/>
<dbReference type="GeneID" id="75205448"/>
<dbReference type="KEGG" id="ecl:EcolC_4264"/>
<dbReference type="HOGENOM" id="CLU_029499_15_2_6"/>
<dbReference type="UniPathway" id="UPA00113">
    <property type="reaction ID" value="UER00532"/>
</dbReference>
<dbReference type="UniPathway" id="UPA00113">
    <property type="reaction ID" value="UER00533"/>
</dbReference>
<dbReference type="UniPathway" id="UPA00973"/>
<dbReference type="GO" id="GO:0005737">
    <property type="term" value="C:cytoplasm"/>
    <property type="evidence" value="ECO:0007669"/>
    <property type="project" value="UniProtKB-SubCell"/>
</dbReference>
<dbReference type="GO" id="GO:0016020">
    <property type="term" value="C:membrane"/>
    <property type="evidence" value="ECO:0007669"/>
    <property type="project" value="GOC"/>
</dbReference>
<dbReference type="GO" id="GO:0019134">
    <property type="term" value="F:glucosamine-1-phosphate N-acetyltransferase activity"/>
    <property type="evidence" value="ECO:0007669"/>
    <property type="project" value="UniProtKB-UniRule"/>
</dbReference>
<dbReference type="GO" id="GO:0000287">
    <property type="term" value="F:magnesium ion binding"/>
    <property type="evidence" value="ECO:0007669"/>
    <property type="project" value="UniProtKB-UniRule"/>
</dbReference>
<dbReference type="GO" id="GO:0003977">
    <property type="term" value="F:UDP-N-acetylglucosamine diphosphorylase activity"/>
    <property type="evidence" value="ECO:0007669"/>
    <property type="project" value="UniProtKB-UniRule"/>
</dbReference>
<dbReference type="GO" id="GO:0000902">
    <property type="term" value="P:cell morphogenesis"/>
    <property type="evidence" value="ECO:0007669"/>
    <property type="project" value="UniProtKB-UniRule"/>
</dbReference>
<dbReference type="GO" id="GO:0071555">
    <property type="term" value="P:cell wall organization"/>
    <property type="evidence" value="ECO:0007669"/>
    <property type="project" value="UniProtKB-KW"/>
</dbReference>
<dbReference type="GO" id="GO:0009245">
    <property type="term" value="P:lipid A biosynthetic process"/>
    <property type="evidence" value="ECO:0007669"/>
    <property type="project" value="UniProtKB-UniRule"/>
</dbReference>
<dbReference type="GO" id="GO:0009252">
    <property type="term" value="P:peptidoglycan biosynthetic process"/>
    <property type="evidence" value="ECO:0007669"/>
    <property type="project" value="UniProtKB-UniRule"/>
</dbReference>
<dbReference type="GO" id="GO:0008360">
    <property type="term" value="P:regulation of cell shape"/>
    <property type="evidence" value="ECO:0007669"/>
    <property type="project" value="UniProtKB-KW"/>
</dbReference>
<dbReference type="GO" id="GO:0006048">
    <property type="term" value="P:UDP-N-acetylglucosamine biosynthetic process"/>
    <property type="evidence" value="ECO:0007669"/>
    <property type="project" value="UniProtKB-UniPathway"/>
</dbReference>
<dbReference type="CDD" id="cd02540">
    <property type="entry name" value="GT2_GlmU_N_bac"/>
    <property type="match status" value="1"/>
</dbReference>
<dbReference type="CDD" id="cd03353">
    <property type="entry name" value="LbH_GlmU_C"/>
    <property type="match status" value="1"/>
</dbReference>
<dbReference type="FunFam" id="2.160.10.10:FF:000011">
    <property type="entry name" value="Bifunctional protein GlmU"/>
    <property type="match status" value="1"/>
</dbReference>
<dbReference type="FunFam" id="3.90.550.10:FF:000006">
    <property type="entry name" value="Bifunctional protein GlmU"/>
    <property type="match status" value="1"/>
</dbReference>
<dbReference type="Gene3D" id="2.160.10.10">
    <property type="entry name" value="Hexapeptide repeat proteins"/>
    <property type="match status" value="1"/>
</dbReference>
<dbReference type="Gene3D" id="3.90.550.10">
    <property type="entry name" value="Spore Coat Polysaccharide Biosynthesis Protein SpsA, Chain A"/>
    <property type="match status" value="1"/>
</dbReference>
<dbReference type="HAMAP" id="MF_01631">
    <property type="entry name" value="GlmU"/>
    <property type="match status" value="1"/>
</dbReference>
<dbReference type="InterPro" id="IPR005882">
    <property type="entry name" value="Bifunctional_GlmU"/>
</dbReference>
<dbReference type="InterPro" id="IPR050065">
    <property type="entry name" value="GlmU-like"/>
</dbReference>
<dbReference type="InterPro" id="IPR038009">
    <property type="entry name" value="GlmU_C_LbH"/>
</dbReference>
<dbReference type="InterPro" id="IPR001451">
    <property type="entry name" value="Hexapep"/>
</dbReference>
<dbReference type="InterPro" id="IPR018357">
    <property type="entry name" value="Hexapep_transf_CS"/>
</dbReference>
<dbReference type="InterPro" id="IPR025877">
    <property type="entry name" value="MobA-like_NTP_Trfase"/>
</dbReference>
<dbReference type="InterPro" id="IPR029044">
    <property type="entry name" value="Nucleotide-diphossugar_trans"/>
</dbReference>
<dbReference type="InterPro" id="IPR011004">
    <property type="entry name" value="Trimer_LpxA-like_sf"/>
</dbReference>
<dbReference type="NCBIfam" id="TIGR01173">
    <property type="entry name" value="glmU"/>
    <property type="match status" value="1"/>
</dbReference>
<dbReference type="NCBIfam" id="NF006986">
    <property type="entry name" value="PRK09451.1"/>
    <property type="match status" value="1"/>
</dbReference>
<dbReference type="PANTHER" id="PTHR43584:SF3">
    <property type="entry name" value="BIFUNCTIONAL PROTEIN GLMU"/>
    <property type="match status" value="1"/>
</dbReference>
<dbReference type="PANTHER" id="PTHR43584">
    <property type="entry name" value="NUCLEOTIDYL TRANSFERASE"/>
    <property type="match status" value="1"/>
</dbReference>
<dbReference type="Pfam" id="PF00132">
    <property type="entry name" value="Hexapep"/>
    <property type="match status" value="1"/>
</dbReference>
<dbReference type="Pfam" id="PF12804">
    <property type="entry name" value="NTP_transf_3"/>
    <property type="match status" value="1"/>
</dbReference>
<dbReference type="SUPFAM" id="SSF53448">
    <property type="entry name" value="Nucleotide-diphospho-sugar transferases"/>
    <property type="match status" value="1"/>
</dbReference>
<dbReference type="SUPFAM" id="SSF51161">
    <property type="entry name" value="Trimeric LpxA-like enzymes"/>
    <property type="match status" value="1"/>
</dbReference>
<dbReference type="PROSITE" id="PS00101">
    <property type="entry name" value="HEXAPEP_TRANSFERASES"/>
    <property type="match status" value="1"/>
</dbReference>
<accession>B1IX08</accession>
<keyword id="KW-0012">Acyltransferase</keyword>
<keyword id="KW-0133">Cell shape</keyword>
<keyword id="KW-0961">Cell wall biogenesis/degradation</keyword>
<keyword id="KW-0963">Cytoplasm</keyword>
<keyword id="KW-0460">Magnesium</keyword>
<keyword id="KW-0479">Metal-binding</keyword>
<keyword id="KW-0511">Multifunctional enzyme</keyword>
<keyword id="KW-0548">Nucleotidyltransferase</keyword>
<keyword id="KW-0573">Peptidoglycan synthesis</keyword>
<keyword id="KW-0677">Repeat</keyword>
<keyword id="KW-0808">Transferase</keyword>
<organism>
    <name type="scientific">Escherichia coli (strain ATCC 8739 / DSM 1576 / NBRC 3972 / NCIMB 8545 / WDCM 00012 / Crooks)</name>
    <dbReference type="NCBI Taxonomy" id="481805"/>
    <lineage>
        <taxon>Bacteria</taxon>
        <taxon>Pseudomonadati</taxon>
        <taxon>Pseudomonadota</taxon>
        <taxon>Gammaproteobacteria</taxon>
        <taxon>Enterobacterales</taxon>
        <taxon>Enterobacteriaceae</taxon>
        <taxon>Escherichia</taxon>
    </lineage>
</organism>
<sequence>MLNNAMSVVILAAGKGTRMYSDLPKVLHTLAGKAMVQHVIDAANELGAAHVHLVYGHGGDLLKQALKDDNLNWVLQAEQLGTGHAMQQAAPFFADDEDILMLYGDVPLISVETLQRLRDAKPQGGIGLLTVKLDDPTGYGRITRENGKVTGIVEHKDATDEQRQIQEINTGILIANGADMKRWLAKLTNNNAQGEYYITDIIALAYQEGREIVAVHPQRLSEVEGVNNRLQLSRLERVYQSEQAEKLLLAGVMLRDPARFDLRGTLTHGRDVEIDTNVIIEGNVTLGHRVKIGTGCVIKNSVIGDDCEISPYTVVEDANLAAACTIGPFARLRPGAELLEGAHVGNFVEMKKARLGKGSKAGHLTYLGDAEIGDNVNIGAGTITCNYDGANKFKTIIGDDVFVGSDTQLVAPVTVGKGATIAAGTTVTRNVGENALAISRVPQTQKEGWRRPVKKK</sequence>
<name>GLMU_ECOLC</name>
<reference key="1">
    <citation type="submission" date="2008-02" db="EMBL/GenBank/DDBJ databases">
        <title>Complete sequence of Escherichia coli C str. ATCC 8739.</title>
        <authorList>
            <person name="Copeland A."/>
            <person name="Lucas S."/>
            <person name="Lapidus A."/>
            <person name="Glavina del Rio T."/>
            <person name="Dalin E."/>
            <person name="Tice H."/>
            <person name="Bruce D."/>
            <person name="Goodwin L."/>
            <person name="Pitluck S."/>
            <person name="Kiss H."/>
            <person name="Brettin T."/>
            <person name="Detter J.C."/>
            <person name="Han C."/>
            <person name="Kuske C.R."/>
            <person name="Schmutz J."/>
            <person name="Larimer F."/>
            <person name="Land M."/>
            <person name="Hauser L."/>
            <person name="Kyrpides N."/>
            <person name="Mikhailova N."/>
            <person name="Ingram L."/>
            <person name="Richardson P."/>
        </authorList>
    </citation>
    <scope>NUCLEOTIDE SEQUENCE [LARGE SCALE GENOMIC DNA]</scope>
    <source>
        <strain>ATCC 8739 / DSM 1576 / NBRC 3972 / NCIMB 8545 / WDCM 00012 / Crooks</strain>
    </source>
</reference>
<feature type="chain" id="PRO_1000088131" description="Bifunctional protein GlmU">
    <location>
        <begin position="1"/>
        <end position="456"/>
    </location>
</feature>
<feature type="region of interest" description="Pyrophosphorylase" evidence="1">
    <location>
        <begin position="1"/>
        <end position="229"/>
    </location>
</feature>
<feature type="region of interest" description="Linker" evidence="1">
    <location>
        <begin position="230"/>
        <end position="250"/>
    </location>
</feature>
<feature type="region of interest" description="N-acetyltransferase" evidence="1">
    <location>
        <begin position="251"/>
        <end position="456"/>
    </location>
</feature>
<feature type="active site" description="Proton acceptor" evidence="1">
    <location>
        <position position="363"/>
    </location>
</feature>
<feature type="binding site" evidence="1">
    <location>
        <begin position="11"/>
        <end position="14"/>
    </location>
    <ligand>
        <name>UDP-N-acetyl-alpha-D-glucosamine</name>
        <dbReference type="ChEBI" id="CHEBI:57705"/>
    </ligand>
</feature>
<feature type="binding site" evidence="1">
    <location>
        <position position="25"/>
    </location>
    <ligand>
        <name>UDP-N-acetyl-alpha-D-glucosamine</name>
        <dbReference type="ChEBI" id="CHEBI:57705"/>
    </ligand>
</feature>
<feature type="binding site" evidence="1">
    <location>
        <position position="76"/>
    </location>
    <ligand>
        <name>UDP-N-acetyl-alpha-D-glucosamine</name>
        <dbReference type="ChEBI" id="CHEBI:57705"/>
    </ligand>
</feature>
<feature type="binding site" evidence="1">
    <location>
        <begin position="81"/>
        <end position="82"/>
    </location>
    <ligand>
        <name>UDP-N-acetyl-alpha-D-glucosamine</name>
        <dbReference type="ChEBI" id="CHEBI:57705"/>
    </ligand>
</feature>
<feature type="binding site" evidence="1">
    <location>
        <begin position="103"/>
        <end position="105"/>
    </location>
    <ligand>
        <name>UDP-N-acetyl-alpha-D-glucosamine</name>
        <dbReference type="ChEBI" id="CHEBI:57705"/>
    </ligand>
</feature>
<feature type="binding site" evidence="1">
    <location>
        <position position="105"/>
    </location>
    <ligand>
        <name>Mg(2+)</name>
        <dbReference type="ChEBI" id="CHEBI:18420"/>
    </ligand>
</feature>
<feature type="binding site" evidence="1">
    <location>
        <position position="140"/>
    </location>
    <ligand>
        <name>UDP-N-acetyl-alpha-D-glucosamine</name>
        <dbReference type="ChEBI" id="CHEBI:57705"/>
    </ligand>
</feature>
<feature type="binding site" evidence="1">
    <location>
        <position position="154"/>
    </location>
    <ligand>
        <name>UDP-N-acetyl-alpha-D-glucosamine</name>
        <dbReference type="ChEBI" id="CHEBI:57705"/>
    </ligand>
</feature>
<feature type="binding site" evidence="1">
    <location>
        <position position="169"/>
    </location>
    <ligand>
        <name>UDP-N-acetyl-alpha-D-glucosamine</name>
        <dbReference type="ChEBI" id="CHEBI:57705"/>
    </ligand>
</feature>
<feature type="binding site" evidence="1">
    <location>
        <position position="227"/>
    </location>
    <ligand>
        <name>Mg(2+)</name>
        <dbReference type="ChEBI" id="CHEBI:18420"/>
    </ligand>
</feature>
<feature type="binding site" evidence="1">
    <location>
        <position position="227"/>
    </location>
    <ligand>
        <name>UDP-N-acetyl-alpha-D-glucosamine</name>
        <dbReference type="ChEBI" id="CHEBI:57705"/>
    </ligand>
</feature>
<feature type="binding site" evidence="1">
    <location>
        <position position="333"/>
    </location>
    <ligand>
        <name>UDP-N-acetyl-alpha-D-glucosamine</name>
        <dbReference type="ChEBI" id="CHEBI:57705"/>
    </ligand>
</feature>
<feature type="binding site" evidence="1">
    <location>
        <position position="351"/>
    </location>
    <ligand>
        <name>UDP-N-acetyl-alpha-D-glucosamine</name>
        <dbReference type="ChEBI" id="CHEBI:57705"/>
    </ligand>
</feature>
<feature type="binding site" evidence="1">
    <location>
        <position position="366"/>
    </location>
    <ligand>
        <name>UDP-N-acetyl-alpha-D-glucosamine</name>
        <dbReference type="ChEBI" id="CHEBI:57705"/>
    </ligand>
</feature>
<feature type="binding site" evidence="1">
    <location>
        <position position="377"/>
    </location>
    <ligand>
        <name>UDP-N-acetyl-alpha-D-glucosamine</name>
        <dbReference type="ChEBI" id="CHEBI:57705"/>
    </ligand>
</feature>
<feature type="binding site" evidence="1">
    <location>
        <position position="380"/>
    </location>
    <ligand>
        <name>acetyl-CoA</name>
        <dbReference type="ChEBI" id="CHEBI:57288"/>
    </ligand>
</feature>
<feature type="binding site" evidence="1">
    <location>
        <begin position="386"/>
        <end position="387"/>
    </location>
    <ligand>
        <name>acetyl-CoA</name>
        <dbReference type="ChEBI" id="CHEBI:57288"/>
    </ligand>
</feature>
<feature type="binding site" evidence="1">
    <location>
        <position position="405"/>
    </location>
    <ligand>
        <name>acetyl-CoA</name>
        <dbReference type="ChEBI" id="CHEBI:57288"/>
    </ligand>
</feature>
<feature type="binding site" evidence="1">
    <location>
        <position position="423"/>
    </location>
    <ligand>
        <name>acetyl-CoA</name>
        <dbReference type="ChEBI" id="CHEBI:57288"/>
    </ligand>
</feature>
<feature type="binding site" evidence="1">
    <location>
        <position position="440"/>
    </location>
    <ligand>
        <name>acetyl-CoA</name>
        <dbReference type="ChEBI" id="CHEBI:57288"/>
    </ligand>
</feature>
<gene>
    <name evidence="1" type="primary">glmU</name>
    <name type="ordered locus">EcolC_4264</name>
</gene>
<evidence type="ECO:0000255" key="1">
    <source>
        <dbReference type="HAMAP-Rule" id="MF_01631"/>
    </source>
</evidence>
<proteinExistence type="inferred from homology"/>
<comment type="function">
    <text evidence="1">Catalyzes the last two sequential reactions in the de novo biosynthetic pathway for UDP-N-acetylglucosamine (UDP-GlcNAc). The C-terminal domain catalyzes the transfer of acetyl group from acetyl coenzyme A to glucosamine-1-phosphate (GlcN-1-P) to produce N-acetylglucosamine-1-phosphate (GlcNAc-1-P), which is converted into UDP-GlcNAc by the transfer of uridine 5-monophosphate (from uridine 5-triphosphate), a reaction catalyzed by the N-terminal domain.</text>
</comment>
<comment type="catalytic activity">
    <reaction evidence="1">
        <text>alpha-D-glucosamine 1-phosphate + acetyl-CoA = N-acetyl-alpha-D-glucosamine 1-phosphate + CoA + H(+)</text>
        <dbReference type="Rhea" id="RHEA:13725"/>
        <dbReference type="ChEBI" id="CHEBI:15378"/>
        <dbReference type="ChEBI" id="CHEBI:57287"/>
        <dbReference type="ChEBI" id="CHEBI:57288"/>
        <dbReference type="ChEBI" id="CHEBI:57776"/>
        <dbReference type="ChEBI" id="CHEBI:58516"/>
        <dbReference type="EC" id="2.3.1.157"/>
    </reaction>
</comment>
<comment type="catalytic activity">
    <reaction evidence="1">
        <text>N-acetyl-alpha-D-glucosamine 1-phosphate + UTP + H(+) = UDP-N-acetyl-alpha-D-glucosamine + diphosphate</text>
        <dbReference type="Rhea" id="RHEA:13509"/>
        <dbReference type="ChEBI" id="CHEBI:15378"/>
        <dbReference type="ChEBI" id="CHEBI:33019"/>
        <dbReference type="ChEBI" id="CHEBI:46398"/>
        <dbReference type="ChEBI" id="CHEBI:57705"/>
        <dbReference type="ChEBI" id="CHEBI:57776"/>
        <dbReference type="EC" id="2.7.7.23"/>
    </reaction>
</comment>
<comment type="cofactor">
    <cofactor evidence="1">
        <name>Mg(2+)</name>
        <dbReference type="ChEBI" id="CHEBI:18420"/>
    </cofactor>
    <text evidence="1">Binds 1 Mg(2+) ion per subunit.</text>
</comment>
<comment type="pathway">
    <text evidence="1">Nucleotide-sugar biosynthesis; UDP-N-acetyl-alpha-D-glucosamine biosynthesis; N-acetyl-alpha-D-glucosamine 1-phosphate from alpha-D-glucosamine 6-phosphate (route II): step 2/2.</text>
</comment>
<comment type="pathway">
    <text evidence="1">Nucleotide-sugar biosynthesis; UDP-N-acetyl-alpha-D-glucosamine biosynthesis; UDP-N-acetyl-alpha-D-glucosamine from N-acetyl-alpha-D-glucosamine 1-phosphate: step 1/1.</text>
</comment>
<comment type="pathway">
    <text evidence="1">Bacterial outer membrane biogenesis; LPS lipid A biosynthesis.</text>
</comment>
<comment type="subunit">
    <text evidence="1">Homotrimer.</text>
</comment>
<comment type="subcellular location">
    <subcellularLocation>
        <location evidence="1">Cytoplasm</location>
    </subcellularLocation>
</comment>
<comment type="similarity">
    <text evidence="1">In the N-terminal section; belongs to the N-acetylglucosamine-1-phosphate uridyltransferase family.</text>
</comment>
<comment type="similarity">
    <text evidence="1">In the C-terminal section; belongs to the transferase hexapeptide repeat family.</text>
</comment>